<organism>
    <name type="scientific">Maricaulis maris (strain MCS10)</name>
    <name type="common">Caulobacter maris</name>
    <dbReference type="NCBI Taxonomy" id="394221"/>
    <lineage>
        <taxon>Bacteria</taxon>
        <taxon>Pseudomonadati</taxon>
        <taxon>Pseudomonadota</taxon>
        <taxon>Alphaproteobacteria</taxon>
        <taxon>Maricaulales</taxon>
        <taxon>Maricaulaceae</taxon>
        <taxon>Maricaulis</taxon>
    </lineage>
</organism>
<keyword id="KW-0963">Cytoplasm</keyword>
<keyword id="KW-0274">FAD</keyword>
<keyword id="KW-0285">Flavoprotein</keyword>
<keyword id="KW-0520">NAD</keyword>
<keyword id="KW-1185">Reference proteome</keyword>
<keyword id="KW-0819">tRNA processing</keyword>
<comment type="function">
    <text evidence="1">NAD-binding protein involved in the addition of a carboxymethylaminomethyl (cmnm) group at the wobble position (U34) of certain tRNAs, forming tRNA-cmnm(5)s(2)U34.</text>
</comment>
<comment type="cofactor">
    <cofactor evidence="1">
        <name>FAD</name>
        <dbReference type="ChEBI" id="CHEBI:57692"/>
    </cofactor>
</comment>
<comment type="subunit">
    <text evidence="1">Homodimer. Heterotetramer of two MnmE and two MnmG subunits.</text>
</comment>
<comment type="subcellular location">
    <subcellularLocation>
        <location evidence="1">Cytoplasm</location>
    </subcellularLocation>
</comment>
<comment type="similarity">
    <text evidence="1">Belongs to the MnmG family.</text>
</comment>
<reference key="1">
    <citation type="submission" date="2006-08" db="EMBL/GenBank/DDBJ databases">
        <title>Complete sequence of Maricaulis maris MCS10.</title>
        <authorList>
            <consortium name="US DOE Joint Genome Institute"/>
            <person name="Copeland A."/>
            <person name="Lucas S."/>
            <person name="Lapidus A."/>
            <person name="Barry K."/>
            <person name="Detter J.C."/>
            <person name="Glavina del Rio T."/>
            <person name="Hammon N."/>
            <person name="Israni S."/>
            <person name="Dalin E."/>
            <person name="Tice H."/>
            <person name="Pitluck S."/>
            <person name="Saunders E."/>
            <person name="Brettin T."/>
            <person name="Bruce D."/>
            <person name="Han C."/>
            <person name="Tapia R."/>
            <person name="Gilna P."/>
            <person name="Schmutz J."/>
            <person name="Larimer F."/>
            <person name="Land M."/>
            <person name="Hauser L."/>
            <person name="Kyrpides N."/>
            <person name="Mikhailova N."/>
            <person name="Viollier P."/>
            <person name="Stephens C."/>
            <person name="Richardson P."/>
        </authorList>
    </citation>
    <scope>NUCLEOTIDE SEQUENCE [LARGE SCALE GENOMIC DNA]</scope>
    <source>
        <strain>MCS10</strain>
    </source>
</reference>
<proteinExistence type="inferred from homology"/>
<accession>Q0AKE9</accession>
<gene>
    <name evidence="1" type="primary">mnmG</name>
    <name evidence="1" type="synonym">gidA</name>
    <name type="ordered locus">Mmar10_2963</name>
</gene>
<sequence>MQTWDVIVIGGGHAGCDAAAASARLGARTLLLTHKLETIGEMSCNPAIGGLGKGHLVREIDALDGVMGRVADASGIQFRLLNRSKGPAVRGPRTQSDRALYRTAMQSELSGQANLEIRAAAIEDLMFEGERCVGAMDADGHAYHAVAVVLTTGTFLRGLIHKGAERIPAGRAGEAPSIGLSDTLYGLNLQMGRLKTGTPARLLKSTIDWDSLEQQAADDVPVPFSFMTDRIEVHQISCAVTRTTEATHKIIADNLGQSAVYSGAIAGRGPRYCPSIEDKVVRFADRSQHQIFLEPEGLDDDTVYPNGISTSLPDDVQQAFLETIPGLEQVVVKRYGYAIEYDYVDPRELDATLQLRKRAGLWLAGQINGTTGYEEAAAQGLVAGANAALFATGREPFVLSRSDAYIGVMIDDLITRGVSEPYRMFTSRAEYRLSLRADNADQRLTPKAMELGLASRGRGAVFCRKMEELSEARSLASNLSLTPNEARDKGLSVNADGKRRAVTELLAYPDVGWDRLVGIWPELGRVSPSVSEQIEIDALYAGYIDRQQADILAFRRDEAVRLPRDLDYSGIGGLSNEAREKLERARPETLGQAARIEGVTPGALTAVLAHVKRRTQGAS</sequence>
<protein>
    <recommendedName>
        <fullName evidence="1">tRNA uridine 5-carboxymethylaminomethyl modification enzyme MnmG</fullName>
    </recommendedName>
    <alternativeName>
        <fullName evidence="1">Glucose-inhibited division protein A</fullName>
    </alternativeName>
</protein>
<feature type="chain" id="PRO_0000345296" description="tRNA uridine 5-carboxymethylaminomethyl modification enzyme MnmG">
    <location>
        <begin position="1"/>
        <end position="619"/>
    </location>
</feature>
<feature type="binding site" evidence="1">
    <location>
        <begin position="10"/>
        <end position="15"/>
    </location>
    <ligand>
        <name>FAD</name>
        <dbReference type="ChEBI" id="CHEBI:57692"/>
    </ligand>
</feature>
<feature type="binding site" evidence="1">
    <location>
        <position position="122"/>
    </location>
    <ligand>
        <name>FAD</name>
        <dbReference type="ChEBI" id="CHEBI:57692"/>
    </ligand>
</feature>
<feature type="binding site" evidence="1">
    <location>
        <position position="177"/>
    </location>
    <ligand>
        <name>FAD</name>
        <dbReference type="ChEBI" id="CHEBI:57692"/>
    </ligand>
</feature>
<feature type="binding site" evidence="1">
    <location>
        <begin position="269"/>
        <end position="283"/>
    </location>
    <ligand>
        <name>NAD(+)</name>
        <dbReference type="ChEBI" id="CHEBI:57540"/>
    </ligand>
</feature>
<feature type="binding site" evidence="1">
    <location>
        <position position="366"/>
    </location>
    <ligand>
        <name>FAD</name>
        <dbReference type="ChEBI" id="CHEBI:57692"/>
    </ligand>
</feature>
<dbReference type="EMBL" id="CP000449">
    <property type="protein sequence ID" value="ABI67244.1"/>
    <property type="molecule type" value="Genomic_DNA"/>
</dbReference>
<dbReference type="RefSeq" id="WP_011644888.1">
    <property type="nucleotide sequence ID" value="NC_008347.1"/>
</dbReference>
<dbReference type="SMR" id="Q0AKE9"/>
<dbReference type="STRING" id="394221.Mmar10_2963"/>
<dbReference type="KEGG" id="mmr:Mmar10_2963"/>
<dbReference type="eggNOG" id="COG0445">
    <property type="taxonomic scope" value="Bacteria"/>
</dbReference>
<dbReference type="HOGENOM" id="CLU_007831_2_2_5"/>
<dbReference type="OrthoDB" id="9815560at2"/>
<dbReference type="Proteomes" id="UP000001964">
    <property type="component" value="Chromosome"/>
</dbReference>
<dbReference type="GO" id="GO:0005829">
    <property type="term" value="C:cytosol"/>
    <property type="evidence" value="ECO:0007669"/>
    <property type="project" value="TreeGrafter"/>
</dbReference>
<dbReference type="GO" id="GO:0050660">
    <property type="term" value="F:flavin adenine dinucleotide binding"/>
    <property type="evidence" value="ECO:0007669"/>
    <property type="project" value="UniProtKB-UniRule"/>
</dbReference>
<dbReference type="GO" id="GO:0030488">
    <property type="term" value="P:tRNA methylation"/>
    <property type="evidence" value="ECO:0007669"/>
    <property type="project" value="TreeGrafter"/>
</dbReference>
<dbReference type="GO" id="GO:0002098">
    <property type="term" value="P:tRNA wobble uridine modification"/>
    <property type="evidence" value="ECO:0007669"/>
    <property type="project" value="InterPro"/>
</dbReference>
<dbReference type="FunFam" id="3.50.50.60:FF:000082">
    <property type="entry name" value="protein MTO1 homolog, mitochondrial isoform X1"/>
    <property type="match status" value="1"/>
</dbReference>
<dbReference type="FunFam" id="1.10.150.570:FF:000001">
    <property type="entry name" value="tRNA uridine 5-carboxymethylaminomethyl modification enzyme MnmG"/>
    <property type="match status" value="1"/>
</dbReference>
<dbReference type="FunFam" id="3.50.50.60:FF:000002">
    <property type="entry name" value="tRNA uridine 5-carboxymethylaminomethyl modification enzyme MnmG"/>
    <property type="match status" value="1"/>
</dbReference>
<dbReference type="Gene3D" id="3.50.50.60">
    <property type="entry name" value="FAD/NAD(P)-binding domain"/>
    <property type="match status" value="2"/>
</dbReference>
<dbReference type="Gene3D" id="1.10.150.570">
    <property type="entry name" value="GidA associated domain, C-terminal subdomain"/>
    <property type="match status" value="1"/>
</dbReference>
<dbReference type="Gene3D" id="1.10.10.1800">
    <property type="entry name" value="tRNA uridine 5-carboxymethylaminomethyl modification enzyme MnmG/GidA"/>
    <property type="match status" value="1"/>
</dbReference>
<dbReference type="HAMAP" id="MF_00129">
    <property type="entry name" value="MnmG_GidA"/>
    <property type="match status" value="1"/>
</dbReference>
<dbReference type="InterPro" id="IPR036188">
    <property type="entry name" value="FAD/NAD-bd_sf"/>
</dbReference>
<dbReference type="InterPro" id="IPR049312">
    <property type="entry name" value="GIDA_C_N"/>
</dbReference>
<dbReference type="InterPro" id="IPR004416">
    <property type="entry name" value="MnmG"/>
</dbReference>
<dbReference type="InterPro" id="IPR002218">
    <property type="entry name" value="MnmG-rel"/>
</dbReference>
<dbReference type="InterPro" id="IPR020595">
    <property type="entry name" value="MnmG-rel_CS"/>
</dbReference>
<dbReference type="InterPro" id="IPR026904">
    <property type="entry name" value="MnmG_C"/>
</dbReference>
<dbReference type="InterPro" id="IPR047001">
    <property type="entry name" value="MnmG_C_subdom"/>
</dbReference>
<dbReference type="InterPro" id="IPR044920">
    <property type="entry name" value="MnmG_C_subdom_sf"/>
</dbReference>
<dbReference type="InterPro" id="IPR040131">
    <property type="entry name" value="MnmG_N"/>
</dbReference>
<dbReference type="NCBIfam" id="TIGR00136">
    <property type="entry name" value="mnmG_gidA"/>
    <property type="match status" value="1"/>
</dbReference>
<dbReference type="PANTHER" id="PTHR11806">
    <property type="entry name" value="GLUCOSE INHIBITED DIVISION PROTEIN A"/>
    <property type="match status" value="1"/>
</dbReference>
<dbReference type="PANTHER" id="PTHR11806:SF0">
    <property type="entry name" value="PROTEIN MTO1 HOMOLOG, MITOCHONDRIAL"/>
    <property type="match status" value="1"/>
</dbReference>
<dbReference type="Pfam" id="PF01134">
    <property type="entry name" value="GIDA"/>
    <property type="match status" value="1"/>
</dbReference>
<dbReference type="Pfam" id="PF21680">
    <property type="entry name" value="GIDA_C_1st"/>
    <property type="match status" value="1"/>
</dbReference>
<dbReference type="Pfam" id="PF13932">
    <property type="entry name" value="SAM_GIDA_C"/>
    <property type="match status" value="1"/>
</dbReference>
<dbReference type="SMART" id="SM01228">
    <property type="entry name" value="GIDA_assoc_3"/>
    <property type="match status" value="1"/>
</dbReference>
<dbReference type="SUPFAM" id="SSF51905">
    <property type="entry name" value="FAD/NAD(P)-binding domain"/>
    <property type="match status" value="1"/>
</dbReference>
<dbReference type="PROSITE" id="PS01280">
    <property type="entry name" value="GIDA_1"/>
    <property type="match status" value="1"/>
</dbReference>
<dbReference type="PROSITE" id="PS01281">
    <property type="entry name" value="GIDA_2"/>
    <property type="match status" value="1"/>
</dbReference>
<evidence type="ECO:0000255" key="1">
    <source>
        <dbReference type="HAMAP-Rule" id="MF_00129"/>
    </source>
</evidence>
<name>MNMG_MARMM</name>